<organism>
    <name type="scientific">Pseudomonas aeruginosa (strain UCBPP-PA14)</name>
    <dbReference type="NCBI Taxonomy" id="208963"/>
    <lineage>
        <taxon>Bacteria</taxon>
        <taxon>Pseudomonadati</taxon>
        <taxon>Pseudomonadota</taxon>
        <taxon>Gammaproteobacteria</taxon>
        <taxon>Pseudomonadales</taxon>
        <taxon>Pseudomonadaceae</taxon>
        <taxon>Pseudomonas</taxon>
    </lineage>
</organism>
<accession>Q02T62</accession>
<evidence type="ECO:0000255" key="1">
    <source>
        <dbReference type="HAMAP-Rule" id="MF_01371"/>
    </source>
</evidence>
<evidence type="ECO:0000305" key="2"/>
<keyword id="KW-0687">Ribonucleoprotein</keyword>
<keyword id="KW-0689">Ribosomal protein</keyword>
<gene>
    <name evidence="1" type="primary">rpmD</name>
    <name type="ordered locus">PA14_09030</name>
</gene>
<dbReference type="EMBL" id="CP000438">
    <property type="protein sequence ID" value="ABJ13516.1"/>
    <property type="molecule type" value="Genomic_DNA"/>
</dbReference>
<dbReference type="RefSeq" id="WP_003093696.1">
    <property type="nucleotide sequence ID" value="NZ_CP034244.1"/>
</dbReference>
<dbReference type="SMR" id="Q02T62"/>
<dbReference type="GeneID" id="77219216"/>
<dbReference type="KEGG" id="pau:PA14_09030"/>
<dbReference type="PseudoCAP" id="PA14_09030"/>
<dbReference type="HOGENOM" id="CLU_131047_1_4_6"/>
<dbReference type="BioCyc" id="PAER208963:G1G74-754-MONOMER"/>
<dbReference type="Proteomes" id="UP000000653">
    <property type="component" value="Chromosome"/>
</dbReference>
<dbReference type="GO" id="GO:0022625">
    <property type="term" value="C:cytosolic large ribosomal subunit"/>
    <property type="evidence" value="ECO:0007669"/>
    <property type="project" value="TreeGrafter"/>
</dbReference>
<dbReference type="GO" id="GO:0003735">
    <property type="term" value="F:structural constituent of ribosome"/>
    <property type="evidence" value="ECO:0007669"/>
    <property type="project" value="InterPro"/>
</dbReference>
<dbReference type="GO" id="GO:0006412">
    <property type="term" value="P:translation"/>
    <property type="evidence" value="ECO:0007669"/>
    <property type="project" value="UniProtKB-UniRule"/>
</dbReference>
<dbReference type="CDD" id="cd01658">
    <property type="entry name" value="Ribosomal_L30"/>
    <property type="match status" value="1"/>
</dbReference>
<dbReference type="FunFam" id="3.30.1390.20:FF:000001">
    <property type="entry name" value="50S ribosomal protein L30"/>
    <property type="match status" value="1"/>
</dbReference>
<dbReference type="Gene3D" id="3.30.1390.20">
    <property type="entry name" value="Ribosomal protein L30, ferredoxin-like fold domain"/>
    <property type="match status" value="1"/>
</dbReference>
<dbReference type="HAMAP" id="MF_01371_B">
    <property type="entry name" value="Ribosomal_uL30_B"/>
    <property type="match status" value="1"/>
</dbReference>
<dbReference type="InterPro" id="IPR036919">
    <property type="entry name" value="Ribo_uL30_ferredoxin-like_sf"/>
</dbReference>
<dbReference type="InterPro" id="IPR005996">
    <property type="entry name" value="Ribosomal_uL30_bac-type"/>
</dbReference>
<dbReference type="InterPro" id="IPR016082">
    <property type="entry name" value="Ribosomal_uL30_ferredoxin-like"/>
</dbReference>
<dbReference type="NCBIfam" id="TIGR01308">
    <property type="entry name" value="rpmD_bact"/>
    <property type="match status" value="1"/>
</dbReference>
<dbReference type="PANTHER" id="PTHR15892:SF2">
    <property type="entry name" value="LARGE RIBOSOMAL SUBUNIT PROTEIN UL30M"/>
    <property type="match status" value="1"/>
</dbReference>
<dbReference type="PANTHER" id="PTHR15892">
    <property type="entry name" value="MITOCHONDRIAL RIBOSOMAL PROTEIN L30"/>
    <property type="match status" value="1"/>
</dbReference>
<dbReference type="Pfam" id="PF00327">
    <property type="entry name" value="Ribosomal_L30"/>
    <property type="match status" value="1"/>
</dbReference>
<dbReference type="PIRSF" id="PIRSF002211">
    <property type="entry name" value="Ribosomal_L30_bac-type"/>
    <property type="match status" value="1"/>
</dbReference>
<dbReference type="SUPFAM" id="SSF55129">
    <property type="entry name" value="Ribosomal protein L30p/L7e"/>
    <property type="match status" value="1"/>
</dbReference>
<name>RL30_PSEAB</name>
<sequence>MATVKVTLVKSLNGRLANHKACVKGLGLRRINHTVEVQDTPENRGMINKAYYLLRVEG</sequence>
<comment type="subunit">
    <text evidence="1">Part of the 50S ribosomal subunit.</text>
</comment>
<comment type="similarity">
    <text evidence="1">Belongs to the universal ribosomal protein uL30 family.</text>
</comment>
<protein>
    <recommendedName>
        <fullName evidence="1">Large ribosomal subunit protein uL30</fullName>
    </recommendedName>
    <alternativeName>
        <fullName evidence="2">50S ribosomal protein L30</fullName>
    </alternativeName>
</protein>
<reference key="1">
    <citation type="journal article" date="2006" name="Genome Biol.">
        <title>Genomic analysis reveals that Pseudomonas aeruginosa virulence is combinatorial.</title>
        <authorList>
            <person name="Lee D.G."/>
            <person name="Urbach J.M."/>
            <person name="Wu G."/>
            <person name="Liberati N.T."/>
            <person name="Feinbaum R.L."/>
            <person name="Miyata S."/>
            <person name="Diggins L.T."/>
            <person name="He J."/>
            <person name="Saucier M."/>
            <person name="Deziel E."/>
            <person name="Friedman L."/>
            <person name="Li L."/>
            <person name="Grills G."/>
            <person name="Montgomery K."/>
            <person name="Kucherlapati R."/>
            <person name="Rahme L.G."/>
            <person name="Ausubel F.M."/>
        </authorList>
    </citation>
    <scope>NUCLEOTIDE SEQUENCE [LARGE SCALE GENOMIC DNA]</scope>
    <source>
        <strain>UCBPP-PA14</strain>
    </source>
</reference>
<feature type="chain" id="PRO_0000273826" description="Large ribosomal subunit protein uL30">
    <location>
        <begin position="1"/>
        <end position="58"/>
    </location>
</feature>
<proteinExistence type="inferred from homology"/>